<reference key="1">
    <citation type="journal article" date="1998" name="FEMS Microbiol. Lett.">
        <title>Construction and characterization of an NaCl-sensitive mutant of Halomonas elongata impaired in ectoine biosynthesis.</title>
        <authorList>
            <person name="Goeller K."/>
            <person name="Ofer A."/>
            <person name="Galinski E.A."/>
        </authorList>
    </citation>
    <scope>NUCLEOTIDE SEQUENCE [GENOMIC DNA]</scope>
    <source>
        <strain>ATCC 33173 / DSM 2581 / NBRC 15536 / NCIMB 2198 / 1H9</strain>
    </source>
</reference>
<reference key="2">
    <citation type="journal article" date="2011" name="Environ. Microbiol.">
        <title>A blueprint of ectoine metabolism from the genome of the industrial producer Halomonas elongata DSM 2581(T).</title>
        <authorList>
            <person name="Schwibbert K."/>
            <person name="Marin-Sanguino A."/>
            <person name="Bagyan I."/>
            <person name="Heidrich G."/>
            <person name="Lentzen G."/>
            <person name="Seitz H."/>
            <person name="Rampp M."/>
            <person name="Schuster S.C."/>
            <person name="Klenk H.P."/>
            <person name="Pfeiffer F."/>
            <person name="Oesterhelt D."/>
            <person name="Kunte H.J."/>
        </authorList>
    </citation>
    <scope>NUCLEOTIDE SEQUENCE [LARGE SCALE GENOMIC DNA]</scope>
    <source>
        <strain>ATCC 33173 / DSM 2581 / NBRC 15536 / NCIMB 2198 / 1H9</strain>
    </source>
</reference>
<reference key="3">
    <citation type="journal article" date="1999" name="J. Bacteriol.">
        <title>Characterization of biosynthetic enzymes for ectoine as a compatible solute in a moderately halophilic eubacterium, Halomonas elongata.</title>
        <authorList>
            <person name="Ono H."/>
            <person name="Sawada K."/>
            <person name="Khunajakr N."/>
            <person name="Tao T."/>
            <person name="Yamamoto M."/>
            <person name="Hiramoto M."/>
            <person name="Shinmyo A."/>
            <person name="Takano M."/>
            <person name="Murooka Y."/>
        </authorList>
    </citation>
    <scope>FUNCTION</scope>
    <scope>CATALYTIC ACTIVITY</scope>
    <scope>COFACTOR</scope>
    <scope>SUBUNIT</scope>
    <scope>BIOPHYSICOCHEMICAL PROPERTIES</scope>
    <scope>CHARACTERIZATION</scope>
    <source>
        <strain>OUT30018</strain>
    </source>
</reference>
<evidence type="ECO:0000255" key="1"/>
<evidence type="ECO:0000269" key="2">
    <source>
    </source>
</evidence>
<evidence type="ECO:0000305" key="3"/>
<accession>O52250</accession>
<accession>E1VCW8</accession>
<feature type="chain" id="PRO_0000120523" description="Diaminobutyrate--2-oxoglutarate transaminase">
    <location>
        <begin position="1"/>
        <end position="421"/>
    </location>
</feature>
<feature type="modified residue" description="N6-(pyridoxal phosphate)lysine" evidence="1">
    <location>
        <position position="267"/>
    </location>
</feature>
<comment type="function">
    <text evidence="2">Catalyzes reversively the conversion of L-aspartate beta-semialdehyde (ASA) to L-2,4-diaminobutyrate (DABA) by transamination with L-glutamate. Seems to use L-glutamate specifically as the amino group donor to ASA, as it is not active with L-alanine, L-glutamine, L-aspartate and L-lysine, and is only poorly active with L-homoserine. In the reverse reaction, gamma-aminobutyric acid (GABA) and L-ornithine can also be used as amino group donors to 2-oxoglutarate, but with a reduced activity compared to that with DABA.</text>
</comment>
<comment type="catalytic activity">
    <reaction evidence="2">
        <text>L-2,4-diaminobutanoate + 2-oxoglutarate = L-aspartate 4-semialdehyde + L-glutamate</text>
        <dbReference type="Rhea" id="RHEA:11160"/>
        <dbReference type="ChEBI" id="CHEBI:16810"/>
        <dbReference type="ChEBI" id="CHEBI:29985"/>
        <dbReference type="ChEBI" id="CHEBI:58761"/>
        <dbReference type="ChEBI" id="CHEBI:537519"/>
        <dbReference type="EC" id="2.6.1.76"/>
    </reaction>
</comment>
<comment type="cofactor">
    <cofactor evidence="2">
        <name>pyridoxal 5'-phosphate</name>
        <dbReference type="ChEBI" id="CHEBI:597326"/>
    </cofactor>
</comment>
<comment type="biophysicochemical properties">
    <kinetics>
        <KM evidence="2">9.1 mM for L-glytamate</KM>
        <KM evidence="2">4.5 mM for DL-ASA</KM>
        <Vmax evidence="2">12.0 umol/min/mg enzyme toward DL-ASA</Vmax>
    </kinetics>
    <phDependence>
        <text evidence="2">Optimum pH is 8.6-8.7.</text>
    </phDependence>
    <temperatureDependence>
        <text evidence="2">Optimum temperature is 25 degrees Celsius.</text>
    </temperatureDependence>
</comment>
<comment type="pathway">
    <text>Amine and polyamine biosynthesis; ectoine biosynthesis; L-ectoine from L-aspartate 4-semialdehyde: step 1/3.</text>
</comment>
<comment type="subunit">
    <text evidence="2">Homohexamer.</text>
</comment>
<comment type="similarity">
    <text evidence="3">Belongs to the class-III pyridoxal-phosphate-dependent aminotransferase family.</text>
</comment>
<protein>
    <recommendedName>
        <fullName>Diaminobutyrate--2-oxoglutarate transaminase</fullName>
        <ecNumber evidence="2">2.6.1.76</ecNumber>
    </recommendedName>
    <alternativeName>
        <fullName>DABA aminotransferase</fullName>
    </alternativeName>
    <alternativeName>
        <fullName>Diaminobutyrate--2-oxoglutarate aminotransferase</fullName>
    </alternativeName>
    <alternativeName>
        <fullName>L-2,4-diaminobutyric acid transaminase</fullName>
    </alternativeName>
</protein>
<sequence>MQTQILERMESDVRTYSRSFPVVFTKARNARLTDEEGREYIDFLAGAGTLNYGHNNPHLKQALLDYIDSDGIVHGLDFWTAAKRDYLETLEEVILKPRGLDYKVHLPGPTGTNAVEAAIRLARVAKGRHNIVSFTNGFHGVTMGALATTGNRKFREATGGVPTQAASFMPFDGYLGSSTDTLDYFEKLLGDKSGGLDVPAAVIVETVQGEGGINVAGLEWLKRLESICRANDILLIIDDIQAGCGRTGKFFSFEHAGITPDIVTNSKSLSGYGLPFAHVLMRPELDKWKPGQYNGTFRGFNLAFATAAAAMRKYWSDDTFERDVQRKARIVEERFGKIAAWLSENGIEASERGRGLMRGIDVGSGDIADKITHQAFENGLIIETSGQDGEVVKCLCPLTIPDEDLVEGLDILETSTKQAFS</sequence>
<keyword id="KW-0032">Aminotransferase</keyword>
<keyword id="KW-0663">Pyridoxal phosphate</keyword>
<keyword id="KW-0808">Transferase</keyword>
<organism>
    <name type="scientific">Halomonas elongata (strain ATCC 33173 / DSM 2581 / NBRC 15536 / NCIMB 2198 / 1H9)</name>
    <dbReference type="NCBI Taxonomy" id="768066"/>
    <lineage>
        <taxon>Bacteria</taxon>
        <taxon>Pseudomonadati</taxon>
        <taxon>Pseudomonadota</taxon>
        <taxon>Gammaproteobacteria</taxon>
        <taxon>Oceanospirillales</taxon>
        <taxon>Halomonadaceae</taxon>
        <taxon>Halomonas</taxon>
    </lineage>
</organism>
<proteinExistence type="evidence at protein level"/>
<gene>
    <name type="primary">ectB</name>
    <name type="ordered locus">HELO_2589</name>
</gene>
<name>ECTB_HALED</name>
<dbReference type="EC" id="2.6.1.76" evidence="2"/>
<dbReference type="EMBL" id="AF031489">
    <property type="protein sequence ID" value="AAC15882.1"/>
    <property type="molecule type" value="Genomic_DNA"/>
</dbReference>
<dbReference type="EMBL" id="FN869568">
    <property type="protein sequence ID" value="CBV42473.1"/>
    <property type="molecule type" value="Genomic_DNA"/>
</dbReference>
<dbReference type="RefSeq" id="WP_013332345.1">
    <property type="nucleotide sequence ID" value="NC_014532.2"/>
</dbReference>
<dbReference type="SMR" id="O52250"/>
<dbReference type="STRING" id="768066.HELO_2589"/>
<dbReference type="GeneID" id="91009908"/>
<dbReference type="KEGG" id="hel:HELO_2589"/>
<dbReference type="eggNOG" id="COG0160">
    <property type="taxonomic scope" value="Bacteria"/>
</dbReference>
<dbReference type="HOGENOM" id="CLU_016922_10_0_6"/>
<dbReference type="OrthoDB" id="9801052at2"/>
<dbReference type="BioCyc" id="MetaCyc:MONOMER-801"/>
<dbReference type="BRENDA" id="2.6.1.76">
    <property type="organism ID" value="2569"/>
</dbReference>
<dbReference type="UniPathway" id="UPA00067">
    <property type="reaction ID" value="UER00121"/>
</dbReference>
<dbReference type="Proteomes" id="UP000008707">
    <property type="component" value="Chromosome"/>
</dbReference>
<dbReference type="GO" id="GO:0045303">
    <property type="term" value="F:diaminobutyrate-2-oxoglutarate transaminase activity"/>
    <property type="evidence" value="ECO:0007669"/>
    <property type="project" value="UniProtKB-EC"/>
</dbReference>
<dbReference type="GO" id="GO:0047307">
    <property type="term" value="F:diaminobutyrate-pyruvate transaminase activity"/>
    <property type="evidence" value="ECO:0007669"/>
    <property type="project" value="InterPro"/>
</dbReference>
<dbReference type="GO" id="GO:0030170">
    <property type="term" value="F:pyridoxal phosphate binding"/>
    <property type="evidence" value="ECO:0007669"/>
    <property type="project" value="InterPro"/>
</dbReference>
<dbReference type="GO" id="GO:0019491">
    <property type="term" value="P:ectoine biosynthetic process"/>
    <property type="evidence" value="ECO:0007669"/>
    <property type="project" value="UniProtKB-UniPathway"/>
</dbReference>
<dbReference type="CDD" id="cd00610">
    <property type="entry name" value="OAT_like"/>
    <property type="match status" value="1"/>
</dbReference>
<dbReference type="Gene3D" id="3.90.1150.10">
    <property type="entry name" value="Aspartate Aminotransferase, domain 1"/>
    <property type="match status" value="1"/>
</dbReference>
<dbReference type="Gene3D" id="3.40.640.10">
    <property type="entry name" value="Type I PLP-dependent aspartate aminotransferase-like (Major domain)"/>
    <property type="match status" value="1"/>
</dbReference>
<dbReference type="InterPro" id="IPR005814">
    <property type="entry name" value="Aminotrans_3"/>
</dbReference>
<dbReference type="InterPro" id="IPR049704">
    <property type="entry name" value="Aminotrans_3_PPA_site"/>
</dbReference>
<dbReference type="InterPro" id="IPR004637">
    <property type="entry name" value="Dat"/>
</dbReference>
<dbReference type="InterPro" id="IPR012773">
    <property type="entry name" value="Ectoine_EctB"/>
</dbReference>
<dbReference type="InterPro" id="IPR015424">
    <property type="entry name" value="PyrdxlP-dep_Trfase"/>
</dbReference>
<dbReference type="InterPro" id="IPR015421">
    <property type="entry name" value="PyrdxlP-dep_Trfase_major"/>
</dbReference>
<dbReference type="InterPro" id="IPR015422">
    <property type="entry name" value="PyrdxlP-dep_Trfase_small"/>
</dbReference>
<dbReference type="NCBIfam" id="TIGR00709">
    <property type="entry name" value="dat"/>
    <property type="match status" value="1"/>
</dbReference>
<dbReference type="NCBIfam" id="TIGR02407">
    <property type="entry name" value="ectoine_ectB"/>
    <property type="match status" value="1"/>
</dbReference>
<dbReference type="NCBIfam" id="NF006733">
    <property type="entry name" value="PRK09264.1"/>
    <property type="match status" value="1"/>
</dbReference>
<dbReference type="PANTHER" id="PTHR43552">
    <property type="entry name" value="DIAMINOBUTYRATE--2-OXOGLUTARATE AMINOTRANSFERASE"/>
    <property type="match status" value="1"/>
</dbReference>
<dbReference type="PANTHER" id="PTHR43552:SF2">
    <property type="entry name" value="DIAMINOBUTYRATE--2-OXOGLUTARATE TRANSAMINASE"/>
    <property type="match status" value="1"/>
</dbReference>
<dbReference type="Pfam" id="PF00202">
    <property type="entry name" value="Aminotran_3"/>
    <property type="match status" value="1"/>
</dbReference>
<dbReference type="PIRSF" id="PIRSF000521">
    <property type="entry name" value="Transaminase_4ab_Lys_Orn"/>
    <property type="match status" value="1"/>
</dbReference>
<dbReference type="SUPFAM" id="SSF53383">
    <property type="entry name" value="PLP-dependent transferases"/>
    <property type="match status" value="1"/>
</dbReference>
<dbReference type="PROSITE" id="PS00600">
    <property type="entry name" value="AA_TRANSFER_CLASS_3"/>
    <property type="match status" value="1"/>
</dbReference>